<evidence type="ECO:0000255" key="1">
    <source>
        <dbReference type="HAMAP-Rule" id="MF_01719"/>
    </source>
</evidence>
<organism>
    <name type="scientific">Burkholderia orbicola (strain AU 1054)</name>
    <dbReference type="NCBI Taxonomy" id="331271"/>
    <lineage>
        <taxon>Bacteria</taxon>
        <taxon>Pseudomonadati</taxon>
        <taxon>Pseudomonadota</taxon>
        <taxon>Betaproteobacteria</taxon>
        <taxon>Burkholderiales</taxon>
        <taxon>Burkholderiaceae</taxon>
        <taxon>Burkholderia</taxon>
        <taxon>Burkholderia cepacia complex</taxon>
        <taxon>Burkholderia orbicola</taxon>
    </lineage>
</organism>
<accession>Q1BR30</accession>
<dbReference type="EC" id="7.4.2.11" evidence="1"/>
<dbReference type="EMBL" id="CP000379">
    <property type="protein sequence ID" value="ABF77925.1"/>
    <property type="molecule type" value="Genomic_DNA"/>
</dbReference>
<dbReference type="SMR" id="Q1BR30"/>
<dbReference type="HOGENOM" id="CLU_000604_1_3_4"/>
<dbReference type="GO" id="GO:0005886">
    <property type="term" value="C:plasma membrane"/>
    <property type="evidence" value="ECO:0007669"/>
    <property type="project" value="UniProtKB-SubCell"/>
</dbReference>
<dbReference type="GO" id="GO:0033232">
    <property type="term" value="F:ABC-type D-methionine transporter activity"/>
    <property type="evidence" value="ECO:0007669"/>
    <property type="project" value="UniProtKB-EC"/>
</dbReference>
<dbReference type="GO" id="GO:0005524">
    <property type="term" value="F:ATP binding"/>
    <property type="evidence" value="ECO:0007669"/>
    <property type="project" value="UniProtKB-KW"/>
</dbReference>
<dbReference type="GO" id="GO:0016887">
    <property type="term" value="F:ATP hydrolysis activity"/>
    <property type="evidence" value="ECO:0007669"/>
    <property type="project" value="InterPro"/>
</dbReference>
<dbReference type="CDD" id="cd03258">
    <property type="entry name" value="ABC_MetN_methionine_transporter"/>
    <property type="match status" value="1"/>
</dbReference>
<dbReference type="FunFam" id="3.40.50.300:FF:000056">
    <property type="entry name" value="Cell division ATP-binding protein FtsE"/>
    <property type="match status" value="1"/>
</dbReference>
<dbReference type="Gene3D" id="3.30.70.260">
    <property type="match status" value="1"/>
</dbReference>
<dbReference type="Gene3D" id="3.40.50.300">
    <property type="entry name" value="P-loop containing nucleotide triphosphate hydrolases"/>
    <property type="match status" value="1"/>
</dbReference>
<dbReference type="InterPro" id="IPR003593">
    <property type="entry name" value="AAA+_ATPase"/>
</dbReference>
<dbReference type="InterPro" id="IPR003439">
    <property type="entry name" value="ABC_transporter-like_ATP-bd"/>
</dbReference>
<dbReference type="InterPro" id="IPR017871">
    <property type="entry name" value="ABC_transporter-like_CS"/>
</dbReference>
<dbReference type="InterPro" id="IPR045865">
    <property type="entry name" value="ACT-like_dom_sf"/>
</dbReference>
<dbReference type="InterPro" id="IPR041701">
    <property type="entry name" value="MetN_ABC"/>
</dbReference>
<dbReference type="InterPro" id="IPR050086">
    <property type="entry name" value="MetN_ABC_transporter-like"/>
</dbReference>
<dbReference type="InterPro" id="IPR018449">
    <property type="entry name" value="NIL_domain"/>
</dbReference>
<dbReference type="InterPro" id="IPR027417">
    <property type="entry name" value="P-loop_NTPase"/>
</dbReference>
<dbReference type="PANTHER" id="PTHR43166">
    <property type="entry name" value="AMINO ACID IMPORT ATP-BINDING PROTEIN"/>
    <property type="match status" value="1"/>
</dbReference>
<dbReference type="PANTHER" id="PTHR43166:SF30">
    <property type="entry name" value="METHIONINE IMPORT ATP-BINDING PROTEIN METN"/>
    <property type="match status" value="1"/>
</dbReference>
<dbReference type="Pfam" id="PF00005">
    <property type="entry name" value="ABC_tran"/>
    <property type="match status" value="1"/>
</dbReference>
<dbReference type="Pfam" id="PF09383">
    <property type="entry name" value="NIL"/>
    <property type="match status" value="1"/>
</dbReference>
<dbReference type="SMART" id="SM00382">
    <property type="entry name" value="AAA"/>
    <property type="match status" value="1"/>
</dbReference>
<dbReference type="SMART" id="SM00930">
    <property type="entry name" value="NIL"/>
    <property type="match status" value="1"/>
</dbReference>
<dbReference type="SUPFAM" id="SSF55021">
    <property type="entry name" value="ACT-like"/>
    <property type="match status" value="1"/>
</dbReference>
<dbReference type="SUPFAM" id="SSF52540">
    <property type="entry name" value="P-loop containing nucleoside triphosphate hydrolases"/>
    <property type="match status" value="1"/>
</dbReference>
<dbReference type="PROSITE" id="PS00211">
    <property type="entry name" value="ABC_TRANSPORTER_1"/>
    <property type="match status" value="1"/>
</dbReference>
<dbReference type="PROSITE" id="PS50893">
    <property type="entry name" value="ABC_TRANSPORTER_2"/>
    <property type="match status" value="1"/>
</dbReference>
<dbReference type="PROSITE" id="PS51264">
    <property type="entry name" value="METN"/>
    <property type="match status" value="1"/>
</dbReference>
<proteinExistence type="inferred from homology"/>
<feature type="chain" id="PRO_0000270262" description="Methionine import ATP-binding protein MetN 2">
    <location>
        <begin position="1"/>
        <end position="394"/>
    </location>
</feature>
<feature type="domain" description="ABC transporter" evidence="1">
    <location>
        <begin position="39"/>
        <end position="278"/>
    </location>
</feature>
<feature type="binding site" evidence="1">
    <location>
        <begin position="75"/>
        <end position="82"/>
    </location>
    <ligand>
        <name>ATP</name>
        <dbReference type="ChEBI" id="CHEBI:30616"/>
    </ligand>
</feature>
<gene>
    <name evidence="1" type="primary">metN2</name>
    <name type="ordered locus">Bcen_3029</name>
</gene>
<keyword id="KW-0029">Amino-acid transport</keyword>
<keyword id="KW-0067">ATP-binding</keyword>
<keyword id="KW-0997">Cell inner membrane</keyword>
<keyword id="KW-1003">Cell membrane</keyword>
<keyword id="KW-0472">Membrane</keyword>
<keyword id="KW-0547">Nucleotide-binding</keyword>
<keyword id="KW-1278">Translocase</keyword>
<keyword id="KW-0813">Transport</keyword>
<name>METN2_BURO1</name>
<sequence length="394" mass="41269">MTQLFDTLGFIEASAVRAGAGADAVAHEEAVTPVGGAAVSLEQVGKVFATPRGQAAALRDVTLDVRRGEVFGIIGRSGAGKSTLLRLLNGLERPSSGRVRVQGVDVGALDEDGLVALRRRTGMVFQHFNLLSAKTVFENVALPLKIAGVPKAERVRKVEALLELVGLAAKRDAYPASLSGGQKQRVGIARALVHDPEVLLCDEATSALDPETTQSILALLADINRRLGLTIVLITHEMEVIRAVCDTVAVIEQGEVVETGPVWRVFGDPRHGATRALLSTLQHDLPAELAARVRPLPEQAALPDGAQIVLDVRYTGESGGEPDVGALAAALGGSVRFLHGGIESIQGHAQGRLVIAATPRADDAGPSTARGGAVAALLERARRHANHAEVLGYV</sequence>
<protein>
    <recommendedName>
        <fullName evidence="1">Methionine import ATP-binding protein MetN 2</fullName>
        <ecNumber evidence="1">7.4.2.11</ecNumber>
    </recommendedName>
</protein>
<reference key="1">
    <citation type="submission" date="2006-05" db="EMBL/GenBank/DDBJ databases">
        <title>Complete sequence of chromosome 2 of Burkholderia cenocepacia AU 1054.</title>
        <authorList>
            <consortium name="US DOE Joint Genome Institute"/>
            <person name="Copeland A."/>
            <person name="Lucas S."/>
            <person name="Lapidus A."/>
            <person name="Barry K."/>
            <person name="Detter J.C."/>
            <person name="Glavina del Rio T."/>
            <person name="Hammon N."/>
            <person name="Israni S."/>
            <person name="Dalin E."/>
            <person name="Tice H."/>
            <person name="Pitluck S."/>
            <person name="Chain P."/>
            <person name="Malfatti S."/>
            <person name="Shin M."/>
            <person name="Vergez L."/>
            <person name="Schmutz J."/>
            <person name="Larimer F."/>
            <person name="Land M."/>
            <person name="Hauser L."/>
            <person name="Kyrpides N."/>
            <person name="Lykidis A."/>
            <person name="LiPuma J.J."/>
            <person name="Konstantinidis K."/>
            <person name="Tiedje J.M."/>
            <person name="Richardson P."/>
        </authorList>
    </citation>
    <scope>NUCLEOTIDE SEQUENCE [LARGE SCALE GENOMIC DNA]</scope>
    <source>
        <strain>AU 1054</strain>
    </source>
</reference>
<comment type="function">
    <text evidence="1">Part of the ABC transporter complex MetNIQ involved in methionine import. Responsible for energy coupling to the transport system.</text>
</comment>
<comment type="catalytic activity">
    <reaction evidence="1">
        <text>L-methionine(out) + ATP + H2O = L-methionine(in) + ADP + phosphate + H(+)</text>
        <dbReference type="Rhea" id="RHEA:29779"/>
        <dbReference type="ChEBI" id="CHEBI:15377"/>
        <dbReference type="ChEBI" id="CHEBI:15378"/>
        <dbReference type="ChEBI" id="CHEBI:30616"/>
        <dbReference type="ChEBI" id="CHEBI:43474"/>
        <dbReference type="ChEBI" id="CHEBI:57844"/>
        <dbReference type="ChEBI" id="CHEBI:456216"/>
        <dbReference type="EC" id="7.4.2.11"/>
    </reaction>
</comment>
<comment type="catalytic activity">
    <reaction evidence="1">
        <text>D-methionine(out) + ATP + H2O = D-methionine(in) + ADP + phosphate + H(+)</text>
        <dbReference type="Rhea" id="RHEA:29767"/>
        <dbReference type="ChEBI" id="CHEBI:15377"/>
        <dbReference type="ChEBI" id="CHEBI:15378"/>
        <dbReference type="ChEBI" id="CHEBI:30616"/>
        <dbReference type="ChEBI" id="CHEBI:43474"/>
        <dbReference type="ChEBI" id="CHEBI:57932"/>
        <dbReference type="ChEBI" id="CHEBI:456216"/>
        <dbReference type="EC" id="7.4.2.11"/>
    </reaction>
</comment>
<comment type="subunit">
    <text evidence="1">The complex is composed of two ATP-binding proteins (MetN), two transmembrane proteins (MetI) and a solute-binding protein (MetQ).</text>
</comment>
<comment type="subcellular location">
    <subcellularLocation>
        <location evidence="1">Cell inner membrane</location>
        <topology evidence="1">Peripheral membrane protein</topology>
    </subcellularLocation>
</comment>
<comment type="similarity">
    <text evidence="1">Belongs to the ABC transporter superfamily. Methionine importer (TC 3.A.1.24) family.</text>
</comment>